<proteinExistence type="inferred from homology"/>
<protein>
    <recommendedName>
        <fullName evidence="1">Small ribosomal subunit protein uS3</fullName>
    </recommendedName>
    <alternativeName>
        <fullName evidence="3">30S ribosomal protein S3</fullName>
    </alternativeName>
</protein>
<accession>Q8TRU1</accession>
<gene>
    <name evidence="1" type="primary">rps3</name>
    <name type="ordered locus">MA_1078</name>
</gene>
<organism>
    <name type="scientific">Methanosarcina acetivorans (strain ATCC 35395 / DSM 2834 / JCM 12185 / C2A)</name>
    <dbReference type="NCBI Taxonomy" id="188937"/>
    <lineage>
        <taxon>Archaea</taxon>
        <taxon>Methanobacteriati</taxon>
        <taxon>Methanobacteriota</taxon>
        <taxon>Stenosarchaea group</taxon>
        <taxon>Methanomicrobia</taxon>
        <taxon>Methanosarcinales</taxon>
        <taxon>Methanosarcinaceae</taxon>
        <taxon>Methanosarcina</taxon>
    </lineage>
</organism>
<feature type="chain" id="PRO_0000130249" description="Small ribosomal subunit protein uS3">
    <location>
        <begin position="1"/>
        <end position="318"/>
    </location>
</feature>
<feature type="domain" description="KH type-2" evidence="1">
    <location>
        <begin position="17"/>
        <end position="86"/>
    </location>
</feature>
<feature type="region of interest" description="Disordered" evidence="2">
    <location>
        <begin position="198"/>
        <end position="275"/>
    </location>
</feature>
<feature type="compositionally biased region" description="Basic and acidic residues" evidence="2">
    <location>
        <begin position="198"/>
        <end position="229"/>
    </location>
</feature>
<feature type="compositionally biased region" description="Pro residues" evidence="2">
    <location>
        <begin position="234"/>
        <end position="250"/>
    </location>
</feature>
<feature type="compositionally biased region" description="Acidic residues" evidence="2">
    <location>
        <begin position="253"/>
        <end position="275"/>
    </location>
</feature>
<reference key="1">
    <citation type="journal article" date="2002" name="Genome Res.">
        <title>The genome of Methanosarcina acetivorans reveals extensive metabolic and physiological diversity.</title>
        <authorList>
            <person name="Galagan J.E."/>
            <person name="Nusbaum C."/>
            <person name="Roy A."/>
            <person name="Endrizzi M.G."/>
            <person name="Macdonald P."/>
            <person name="FitzHugh W."/>
            <person name="Calvo S."/>
            <person name="Engels R."/>
            <person name="Smirnov S."/>
            <person name="Atnoor D."/>
            <person name="Brown A."/>
            <person name="Allen N."/>
            <person name="Naylor J."/>
            <person name="Stange-Thomann N."/>
            <person name="DeArellano K."/>
            <person name="Johnson R."/>
            <person name="Linton L."/>
            <person name="McEwan P."/>
            <person name="McKernan K."/>
            <person name="Talamas J."/>
            <person name="Tirrell A."/>
            <person name="Ye W."/>
            <person name="Zimmer A."/>
            <person name="Barber R.D."/>
            <person name="Cann I."/>
            <person name="Graham D.E."/>
            <person name="Grahame D.A."/>
            <person name="Guss A.M."/>
            <person name="Hedderich R."/>
            <person name="Ingram-Smith C."/>
            <person name="Kuettner H.C."/>
            <person name="Krzycki J.A."/>
            <person name="Leigh J.A."/>
            <person name="Li W."/>
            <person name="Liu J."/>
            <person name="Mukhopadhyay B."/>
            <person name="Reeve J.N."/>
            <person name="Smith K."/>
            <person name="Springer T.A."/>
            <person name="Umayam L.A."/>
            <person name="White O."/>
            <person name="White R.H."/>
            <person name="de Macario E.C."/>
            <person name="Ferry J.G."/>
            <person name="Jarrell K.F."/>
            <person name="Jing H."/>
            <person name="Macario A.J.L."/>
            <person name="Paulsen I.T."/>
            <person name="Pritchett M."/>
            <person name="Sowers K.R."/>
            <person name="Swanson R.V."/>
            <person name="Zinder S.H."/>
            <person name="Lander E."/>
            <person name="Metcalf W.W."/>
            <person name="Birren B."/>
        </authorList>
    </citation>
    <scope>NUCLEOTIDE SEQUENCE [LARGE SCALE GENOMIC DNA]</scope>
    <source>
        <strain>ATCC 35395 / DSM 2834 / JCM 12185 / C2A</strain>
    </source>
</reference>
<sequence>MAIEKKFVNDGYVKASMDEYFAEQLSRAGYGGMELNRTPMGTQIVIYSEKPGMVIGKAGKVIRKLTRDVANKYSLENPQIDAQEVKRPELNAQMMASRLAASIERGWYFRKAGHNTLRAVMNAGALGCEVVISGKLTGARSRVEKFVDGYIKHSGNPVEEVVDEGFAVAVKKLGTLGCKVRIIQPGVVLPDSYKVRESVEVEEPAEKPAEKPAEKPAEKAAAPKKEAAKARAPAPAPEAPAPAPEAPAPAPVEEAEVAEPEEAEEVQAETSEEIEGAELVYVEGSDEVRRQVNGVWQHKHGSYDYWHPMARVHKEAKE</sequence>
<evidence type="ECO:0000255" key="1">
    <source>
        <dbReference type="HAMAP-Rule" id="MF_01309"/>
    </source>
</evidence>
<evidence type="ECO:0000256" key="2">
    <source>
        <dbReference type="SAM" id="MobiDB-lite"/>
    </source>
</evidence>
<evidence type="ECO:0000305" key="3"/>
<dbReference type="EMBL" id="AE010299">
    <property type="protein sequence ID" value="AAM04503.1"/>
    <property type="molecule type" value="Genomic_DNA"/>
</dbReference>
<dbReference type="RefSeq" id="WP_011021107.1">
    <property type="nucleotide sequence ID" value="NC_003552.1"/>
</dbReference>
<dbReference type="SMR" id="Q8TRU1"/>
<dbReference type="FunCoup" id="Q8TRU1">
    <property type="interactions" value="178"/>
</dbReference>
<dbReference type="STRING" id="188937.MA_1078"/>
<dbReference type="EnsemblBacteria" id="AAM04503">
    <property type="protein sequence ID" value="AAM04503"/>
    <property type="gene ID" value="MA_1078"/>
</dbReference>
<dbReference type="GeneID" id="1472968"/>
<dbReference type="KEGG" id="mac:MA_1078"/>
<dbReference type="HOGENOM" id="CLU_058591_1_0_2"/>
<dbReference type="InParanoid" id="Q8TRU1"/>
<dbReference type="OrthoDB" id="9126at2157"/>
<dbReference type="PhylomeDB" id="Q8TRU1"/>
<dbReference type="Proteomes" id="UP000002487">
    <property type="component" value="Chromosome"/>
</dbReference>
<dbReference type="GO" id="GO:0022627">
    <property type="term" value="C:cytosolic small ribosomal subunit"/>
    <property type="evidence" value="ECO:0000318"/>
    <property type="project" value="GO_Central"/>
</dbReference>
<dbReference type="GO" id="GO:0019843">
    <property type="term" value="F:rRNA binding"/>
    <property type="evidence" value="ECO:0007669"/>
    <property type="project" value="UniProtKB-UniRule"/>
</dbReference>
<dbReference type="GO" id="GO:0003735">
    <property type="term" value="F:structural constituent of ribosome"/>
    <property type="evidence" value="ECO:0000318"/>
    <property type="project" value="GO_Central"/>
</dbReference>
<dbReference type="GO" id="GO:0006412">
    <property type="term" value="P:translation"/>
    <property type="evidence" value="ECO:0007669"/>
    <property type="project" value="UniProtKB-UniRule"/>
</dbReference>
<dbReference type="CDD" id="cd02411">
    <property type="entry name" value="KH-II_30S_S3_arch"/>
    <property type="match status" value="1"/>
</dbReference>
<dbReference type="FunFam" id="3.30.1140.32:FF:000012">
    <property type="entry name" value="30S ribosomal protein S3"/>
    <property type="match status" value="1"/>
</dbReference>
<dbReference type="FunFam" id="3.30.300.20:FF:000001">
    <property type="entry name" value="30S ribosomal protein S3"/>
    <property type="match status" value="1"/>
</dbReference>
<dbReference type="Gene3D" id="3.30.300.20">
    <property type="match status" value="1"/>
</dbReference>
<dbReference type="Gene3D" id="3.30.1140.32">
    <property type="entry name" value="Ribosomal protein S3, C-terminal domain"/>
    <property type="match status" value="1"/>
</dbReference>
<dbReference type="HAMAP" id="MF_01309_A">
    <property type="entry name" value="Ribosomal_uS3_A"/>
    <property type="match status" value="1"/>
</dbReference>
<dbReference type="InterPro" id="IPR004087">
    <property type="entry name" value="KH_dom"/>
</dbReference>
<dbReference type="InterPro" id="IPR015946">
    <property type="entry name" value="KH_dom-like_a/b"/>
</dbReference>
<dbReference type="InterPro" id="IPR004044">
    <property type="entry name" value="KH_dom_type_2"/>
</dbReference>
<dbReference type="InterPro" id="IPR009019">
    <property type="entry name" value="KH_sf_prok-type"/>
</dbReference>
<dbReference type="InterPro" id="IPR036419">
    <property type="entry name" value="Ribosomal_S3_C_sf"/>
</dbReference>
<dbReference type="InterPro" id="IPR027488">
    <property type="entry name" value="Ribosomal_uS3_arc"/>
</dbReference>
<dbReference type="InterPro" id="IPR001351">
    <property type="entry name" value="Ribosomal_uS3_C"/>
</dbReference>
<dbReference type="InterPro" id="IPR005703">
    <property type="entry name" value="Ribosomal_uS3_euk/arc"/>
</dbReference>
<dbReference type="NCBIfam" id="NF003219">
    <property type="entry name" value="PRK04191.1"/>
    <property type="match status" value="1"/>
</dbReference>
<dbReference type="NCBIfam" id="TIGR01008">
    <property type="entry name" value="uS3_euk_arch"/>
    <property type="match status" value="1"/>
</dbReference>
<dbReference type="PANTHER" id="PTHR11760">
    <property type="entry name" value="30S/40S RIBOSOMAL PROTEIN S3"/>
    <property type="match status" value="1"/>
</dbReference>
<dbReference type="PANTHER" id="PTHR11760:SF32">
    <property type="entry name" value="SMALL RIBOSOMAL SUBUNIT PROTEIN US3"/>
    <property type="match status" value="1"/>
</dbReference>
<dbReference type="Pfam" id="PF07650">
    <property type="entry name" value="KH_2"/>
    <property type="match status" value="1"/>
</dbReference>
<dbReference type="Pfam" id="PF00189">
    <property type="entry name" value="Ribosomal_S3_C"/>
    <property type="match status" value="1"/>
</dbReference>
<dbReference type="SMART" id="SM00322">
    <property type="entry name" value="KH"/>
    <property type="match status" value="1"/>
</dbReference>
<dbReference type="SUPFAM" id="SSF54814">
    <property type="entry name" value="Prokaryotic type KH domain (KH-domain type II)"/>
    <property type="match status" value="1"/>
</dbReference>
<dbReference type="SUPFAM" id="SSF54821">
    <property type="entry name" value="Ribosomal protein S3 C-terminal domain"/>
    <property type="match status" value="1"/>
</dbReference>
<dbReference type="PROSITE" id="PS50823">
    <property type="entry name" value="KH_TYPE_2"/>
    <property type="match status" value="1"/>
</dbReference>
<name>RS3_METAC</name>
<comment type="function">
    <text evidence="1">Binds the lower part of the 30S subunit head.</text>
</comment>
<comment type="subunit">
    <text evidence="1">Part of the 30S ribosomal subunit.</text>
</comment>
<comment type="similarity">
    <text evidence="1">Belongs to the universal ribosomal protein uS3 family.</text>
</comment>
<keyword id="KW-1185">Reference proteome</keyword>
<keyword id="KW-0687">Ribonucleoprotein</keyword>
<keyword id="KW-0689">Ribosomal protein</keyword>
<keyword id="KW-0694">RNA-binding</keyword>
<keyword id="KW-0699">rRNA-binding</keyword>